<evidence type="ECO:0000255" key="1"/>
<organism>
    <name type="scientific">Equine herpesvirus 2 (strain 86/87)</name>
    <name type="common">EHV-2</name>
    <dbReference type="NCBI Taxonomy" id="82831"/>
    <lineage>
        <taxon>Viruses</taxon>
        <taxon>Duplodnaviria</taxon>
        <taxon>Heunggongvirae</taxon>
        <taxon>Peploviricota</taxon>
        <taxon>Herviviricetes</taxon>
        <taxon>Herpesvirales</taxon>
        <taxon>Orthoherpesviridae</taxon>
        <taxon>Gammaherpesvirinae</taxon>
        <taxon>Percavirus</taxon>
        <taxon>Percavirus equidgamma2</taxon>
        <taxon>Equid gammaherpesvirus 2</taxon>
    </lineage>
</organism>
<feature type="signal peptide" evidence="1">
    <location>
        <begin position="1"/>
        <end position="25"/>
    </location>
</feature>
<feature type="chain" id="PRO_0000406023" description="Protein E6A">
    <location>
        <begin position="26"/>
        <end position="115"/>
    </location>
</feature>
<gene>
    <name type="primary">12</name>
</gene>
<accession>Q66618</accession>
<proteinExistence type="inferred from homology"/>
<organismHost>
    <name type="scientific">Equus caballus</name>
    <name type="common">Horse</name>
    <dbReference type="NCBI Taxonomy" id="9796"/>
</organismHost>
<sequence>MTDKFYFYGLFWGILLFVFLQHMQGNVPPTPLPPLSSEDLVNRSATPQLPPTCDGNATTFGGVKFPKKKTPPACACKVLEKFSCMGSFGCIGYSWGCSCCCFKSCKNVTTSPLLQ</sequence>
<dbReference type="EMBL" id="U20824">
    <property type="protein sequence ID" value="AAC13801.2"/>
    <property type="molecule type" value="Genomic_DNA"/>
</dbReference>
<dbReference type="PIR" id="S55608">
    <property type="entry name" value="S55608"/>
</dbReference>
<dbReference type="KEGG" id="vg:1461056"/>
<dbReference type="Proteomes" id="UP000007083">
    <property type="component" value="Segment"/>
</dbReference>
<reference key="1">
    <citation type="journal article" date="1995" name="J. Mol. Biol.">
        <title>The DNA sequence of equine herpesvirus 2.</title>
        <authorList>
            <person name="Telford E.A.R."/>
            <person name="Watson M.S."/>
            <person name="Aird H.C."/>
            <person name="Perry J."/>
            <person name="Davison A.J."/>
        </authorList>
    </citation>
    <scope>NUCLEOTIDE SEQUENCE [LARGE SCALE GENOMIC DNA]</scope>
</reference>
<reference key="2">
    <citation type="submission" date="2015-01" db="EMBL/GenBank/DDBJ databases">
        <authorList>
            <person name="Davison A.J."/>
        </authorList>
    </citation>
    <scope>SEQUENCE REVISION</scope>
</reference>
<name>VG12_EHV2</name>
<keyword id="KW-1185">Reference proteome</keyword>
<keyword id="KW-0732">Signal</keyword>
<protein>
    <recommendedName>
        <fullName>Protein E6A</fullName>
    </recommendedName>
</protein>